<name>RL25_GEOSW</name>
<protein>
    <recommendedName>
        <fullName evidence="1">Large ribosomal subunit protein bL25</fullName>
    </recommendedName>
    <alternativeName>
        <fullName evidence="3">50S ribosomal protein L25</fullName>
    </alternativeName>
    <alternativeName>
        <fullName evidence="1">General stress protein CTC</fullName>
    </alternativeName>
</protein>
<organism>
    <name type="scientific">Geobacillus sp. (strain WCH70)</name>
    <dbReference type="NCBI Taxonomy" id="471223"/>
    <lineage>
        <taxon>Bacteria</taxon>
        <taxon>Bacillati</taxon>
        <taxon>Bacillota</taxon>
        <taxon>Bacilli</taxon>
        <taxon>Bacillales</taxon>
        <taxon>Anoxybacillaceae</taxon>
        <taxon>Geobacillus</taxon>
    </lineage>
</organism>
<evidence type="ECO:0000255" key="1">
    <source>
        <dbReference type="HAMAP-Rule" id="MF_01334"/>
    </source>
</evidence>
<evidence type="ECO:0000256" key="2">
    <source>
        <dbReference type="SAM" id="MobiDB-lite"/>
    </source>
</evidence>
<evidence type="ECO:0000305" key="3"/>
<gene>
    <name evidence="1" type="primary">rplY</name>
    <name evidence="1" type="synonym">ctc</name>
    <name type="ordered locus">GWCH70_0047</name>
</gene>
<proteinExistence type="inferred from homology"/>
<keyword id="KW-0687">Ribonucleoprotein</keyword>
<keyword id="KW-0689">Ribosomal protein</keyword>
<keyword id="KW-0694">RNA-binding</keyword>
<keyword id="KW-0699">rRNA-binding</keyword>
<comment type="function">
    <text evidence="1">This is one of the proteins that binds to the 5S RNA in the ribosome where it forms part of the central protuberance.</text>
</comment>
<comment type="subunit">
    <text evidence="1">Part of the 50S ribosomal subunit; part of the 5S rRNA/L5/L18/L25 subcomplex. Contacts the 5S rRNA. Binds to the 5S rRNA independently of L5 and L18.</text>
</comment>
<comment type="similarity">
    <text evidence="1">Belongs to the bacterial ribosomal protein bL25 family. CTC subfamily.</text>
</comment>
<reference key="1">
    <citation type="submission" date="2009-06" db="EMBL/GenBank/DDBJ databases">
        <title>Complete sequence of chromosome of Geopacillus sp. WCH70.</title>
        <authorList>
            <consortium name="US DOE Joint Genome Institute"/>
            <person name="Lucas S."/>
            <person name="Copeland A."/>
            <person name="Lapidus A."/>
            <person name="Glavina del Rio T."/>
            <person name="Dalin E."/>
            <person name="Tice H."/>
            <person name="Bruce D."/>
            <person name="Goodwin L."/>
            <person name="Pitluck S."/>
            <person name="Chertkov O."/>
            <person name="Brettin T."/>
            <person name="Detter J.C."/>
            <person name="Han C."/>
            <person name="Larimer F."/>
            <person name="Land M."/>
            <person name="Hauser L."/>
            <person name="Kyrpides N."/>
            <person name="Mikhailova N."/>
            <person name="Brumm P."/>
            <person name="Mead D.A."/>
            <person name="Richardson P."/>
        </authorList>
    </citation>
    <scope>NUCLEOTIDE SEQUENCE [LARGE SCALE GENOMIC DNA]</scope>
    <source>
        <strain>WCH70</strain>
    </source>
</reference>
<feature type="chain" id="PRO_1000214652" description="Large ribosomal subunit protein bL25">
    <location>
        <begin position="1"/>
        <end position="210"/>
    </location>
</feature>
<feature type="region of interest" description="Disordered" evidence="2">
    <location>
        <begin position="179"/>
        <end position="210"/>
    </location>
</feature>
<feature type="compositionally biased region" description="Basic and acidic residues" evidence="2">
    <location>
        <begin position="185"/>
        <end position="210"/>
    </location>
</feature>
<accession>C5D373</accession>
<sequence>MAVVLEAKERPDKKHSTLRRIRLQGNIPGILYGKNIDNQMIFVSGAALEKTIREGGRHSLMTLKIGEKDYSVLLREIQRDPLRGNILHADFQAVDMSTEVDIDVDVRLIGEAAGEKDGGVLQQNLHQLTIRVLPANIPPSIDIDISHLQIGDTVTVGDINTGGKYEIIDDPSEVIATILPPQQEEEIHSGEQQEPGHPDAEEGRETTPES</sequence>
<dbReference type="EMBL" id="CP001638">
    <property type="protein sequence ID" value="ACS22989.1"/>
    <property type="molecule type" value="Genomic_DNA"/>
</dbReference>
<dbReference type="SMR" id="C5D373"/>
<dbReference type="STRING" id="471223.GWCH70_0047"/>
<dbReference type="KEGG" id="gwc:GWCH70_0047"/>
<dbReference type="eggNOG" id="COG1825">
    <property type="taxonomic scope" value="Bacteria"/>
</dbReference>
<dbReference type="HOGENOM" id="CLU_075939_2_0_9"/>
<dbReference type="OrthoDB" id="9790002at2"/>
<dbReference type="GO" id="GO:0022625">
    <property type="term" value="C:cytosolic large ribosomal subunit"/>
    <property type="evidence" value="ECO:0007669"/>
    <property type="project" value="TreeGrafter"/>
</dbReference>
<dbReference type="GO" id="GO:0008097">
    <property type="term" value="F:5S rRNA binding"/>
    <property type="evidence" value="ECO:0007669"/>
    <property type="project" value="InterPro"/>
</dbReference>
<dbReference type="GO" id="GO:0003735">
    <property type="term" value="F:structural constituent of ribosome"/>
    <property type="evidence" value="ECO:0007669"/>
    <property type="project" value="InterPro"/>
</dbReference>
<dbReference type="GO" id="GO:0006412">
    <property type="term" value="P:translation"/>
    <property type="evidence" value="ECO:0007669"/>
    <property type="project" value="UniProtKB-UniRule"/>
</dbReference>
<dbReference type="CDD" id="cd00495">
    <property type="entry name" value="Ribosomal_L25_TL5_CTC"/>
    <property type="match status" value="1"/>
</dbReference>
<dbReference type="Gene3D" id="2.170.120.20">
    <property type="entry name" value="Ribosomal protein L25, beta domain"/>
    <property type="match status" value="1"/>
</dbReference>
<dbReference type="Gene3D" id="2.40.240.10">
    <property type="entry name" value="Ribosomal Protein L25, Chain P"/>
    <property type="match status" value="1"/>
</dbReference>
<dbReference type="HAMAP" id="MF_01334">
    <property type="entry name" value="Ribosomal_bL25_CTC"/>
    <property type="match status" value="1"/>
</dbReference>
<dbReference type="InterPro" id="IPR020056">
    <property type="entry name" value="Rbsml_bL25/Gln-tRNA_synth_N"/>
</dbReference>
<dbReference type="InterPro" id="IPR011035">
    <property type="entry name" value="Ribosomal_bL25/Gln-tRNA_synth"/>
</dbReference>
<dbReference type="InterPro" id="IPR020057">
    <property type="entry name" value="Ribosomal_bL25_b-dom"/>
</dbReference>
<dbReference type="InterPro" id="IPR037121">
    <property type="entry name" value="Ribosomal_bL25_C"/>
</dbReference>
<dbReference type="InterPro" id="IPR001021">
    <property type="entry name" value="Ribosomal_bL25_long"/>
</dbReference>
<dbReference type="InterPro" id="IPR029751">
    <property type="entry name" value="Ribosomal_L25_dom"/>
</dbReference>
<dbReference type="InterPro" id="IPR020930">
    <property type="entry name" value="Ribosomal_uL5_bac-type"/>
</dbReference>
<dbReference type="NCBIfam" id="TIGR00731">
    <property type="entry name" value="bL25_bact_ctc"/>
    <property type="match status" value="1"/>
</dbReference>
<dbReference type="NCBIfam" id="NF004133">
    <property type="entry name" value="PRK05618.2-4"/>
    <property type="match status" value="1"/>
</dbReference>
<dbReference type="PANTHER" id="PTHR33284">
    <property type="entry name" value="RIBOSOMAL PROTEIN L25/GLN-TRNA SYNTHETASE, ANTI-CODON-BINDING DOMAIN-CONTAINING PROTEIN"/>
    <property type="match status" value="1"/>
</dbReference>
<dbReference type="PANTHER" id="PTHR33284:SF1">
    <property type="entry name" value="RIBOSOMAL PROTEIN L25_GLN-TRNA SYNTHETASE, ANTI-CODON-BINDING DOMAIN-CONTAINING PROTEIN"/>
    <property type="match status" value="1"/>
</dbReference>
<dbReference type="Pfam" id="PF01386">
    <property type="entry name" value="Ribosomal_L25p"/>
    <property type="match status" value="1"/>
</dbReference>
<dbReference type="Pfam" id="PF14693">
    <property type="entry name" value="Ribosomal_TL5_C"/>
    <property type="match status" value="1"/>
</dbReference>
<dbReference type="SUPFAM" id="SSF50715">
    <property type="entry name" value="Ribosomal protein L25-like"/>
    <property type="match status" value="1"/>
</dbReference>